<geneLocation type="non-photosynthetic plastid"/>
<proteinExistence type="inferred from homology"/>
<organism>
    <name type="scientific">Helicosporidium sp. subsp. Simulium jonesii</name>
    <name type="common">Green alga</name>
    <dbReference type="NCBI Taxonomy" id="145475"/>
    <lineage>
        <taxon>Eukaryota</taxon>
        <taxon>Viridiplantae</taxon>
        <taxon>Chlorophyta</taxon>
        <taxon>core chlorophytes</taxon>
        <taxon>Trebouxiophyceae</taxon>
        <taxon>Chlorellales</taxon>
        <taxon>Chlorellaceae</taxon>
        <taxon>Helicosporidium</taxon>
    </lineage>
</organism>
<evidence type="ECO:0000250" key="1"/>
<evidence type="ECO:0000305" key="2"/>
<feature type="chain" id="PRO_0000308998" description="Small ribosomal subunit protein uS19c">
    <location>
        <begin position="1"/>
        <end position="117"/>
    </location>
</feature>
<protein>
    <recommendedName>
        <fullName evidence="2">Small ribosomal subunit protein uS19c</fullName>
    </recommendedName>
    <alternativeName>
        <fullName>Plastid 30S ribosomal protein S19</fullName>
    </alternativeName>
</protein>
<comment type="function">
    <text evidence="1">Protein S19 forms a complex with S13 that binds strongly to the 16S ribosomal RNA.</text>
</comment>
<comment type="subcellular location">
    <subcellularLocation>
        <location>Plastid</location>
    </subcellularLocation>
</comment>
<comment type="similarity">
    <text evidence="2">Belongs to the universal ribosomal protein uS19 family.</text>
</comment>
<accession>Q2EEV9</accession>
<dbReference type="EMBL" id="DQ398104">
    <property type="protein sequence ID" value="ABD33983.1"/>
    <property type="molecule type" value="Genomic_DNA"/>
</dbReference>
<dbReference type="RefSeq" id="YP_635935.1">
    <property type="nucleotide sequence ID" value="NC_008100.1"/>
</dbReference>
<dbReference type="SMR" id="Q2EEV9"/>
<dbReference type="GeneID" id="4100429"/>
<dbReference type="GO" id="GO:0005763">
    <property type="term" value="C:mitochondrial small ribosomal subunit"/>
    <property type="evidence" value="ECO:0007669"/>
    <property type="project" value="TreeGrafter"/>
</dbReference>
<dbReference type="GO" id="GO:0009536">
    <property type="term" value="C:plastid"/>
    <property type="evidence" value="ECO:0007669"/>
    <property type="project" value="UniProtKB-SubCell"/>
</dbReference>
<dbReference type="GO" id="GO:0019843">
    <property type="term" value="F:rRNA binding"/>
    <property type="evidence" value="ECO:0007669"/>
    <property type="project" value="UniProtKB-KW"/>
</dbReference>
<dbReference type="GO" id="GO:0003735">
    <property type="term" value="F:structural constituent of ribosome"/>
    <property type="evidence" value="ECO:0007669"/>
    <property type="project" value="InterPro"/>
</dbReference>
<dbReference type="GO" id="GO:0000028">
    <property type="term" value="P:ribosomal small subunit assembly"/>
    <property type="evidence" value="ECO:0007669"/>
    <property type="project" value="TreeGrafter"/>
</dbReference>
<dbReference type="GO" id="GO:0006412">
    <property type="term" value="P:translation"/>
    <property type="evidence" value="ECO:0007669"/>
    <property type="project" value="InterPro"/>
</dbReference>
<dbReference type="FunFam" id="3.30.860.10:FF:000001">
    <property type="entry name" value="30S ribosomal protein S19"/>
    <property type="match status" value="1"/>
</dbReference>
<dbReference type="Gene3D" id="3.30.860.10">
    <property type="entry name" value="30s Ribosomal Protein S19, Chain A"/>
    <property type="match status" value="1"/>
</dbReference>
<dbReference type="HAMAP" id="MF_00531">
    <property type="entry name" value="Ribosomal_uS19"/>
    <property type="match status" value="1"/>
</dbReference>
<dbReference type="InterPro" id="IPR002222">
    <property type="entry name" value="Ribosomal_uS19"/>
</dbReference>
<dbReference type="InterPro" id="IPR005732">
    <property type="entry name" value="Ribosomal_uS19_bac-type"/>
</dbReference>
<dbReference type="InterPro" id="IPR020934">
    <property type="entry name" value="Ribosomal_uS19_CS"/>
</dbReference>
<dbReference type="InterPro" id="IPR023575">
    <property type="entry name" value="Ribosomal_uS19_SF"/>
</dbReference>
<dbReference type="NCBIfam" id="TIGR01050">
    <property type="entry name" value="rpsS_bact"/>
    <property type="match status" value="1"/>
</dbReference>
<dbReference type="PANTHER" id="PTHR11880">
    <property type="entry name" value="RIBOSOMAL PROTEIN S19P FAMILY MEMBER"/>
    <property type="match status" value="1"/>
</dbReference>
<dbReference type="PANTHER" id="PTHR11880:SF8">
    <property type="entry name" value="SMALL RIBOSOMAL SUBUNIT PROTEIN US19M"/>
    <property type="match status" value="1"/>
</dbReference>
<dbReference type="Pfam" id="PF00203">
    <property type="entry name" value="Ribosomal_S19"/>
    <property type="match status" value="1"/>
</dbReference>
<dbReference type="PRINTS" id="PR00975">
    <property type="entry name" value="RIBOSOMALS19"/>
</dbReference>
<dbReference type="SUPFAM" id="SSF54570">
    <property type="entry name" value="Ribosomal protein S19"/>
    <property type="match status" value="1"/>
</dbReference>
<dbReference type="PROSITE" id="PS00323">
    <property type="entry name" value="RIBOSOMAL_S19"/>
    <property type="match status" value="1"/>
</dbReference>
<reference key="1">
    <citation type="journal article" date="2006" name="BMC Biol.">
        <title>The complete plastid genome sequence of the parasitic green alga, Helicosporidium sp. is highly reduced and structured.</title>
        <authorList>
            <person name="de Koning A.P."/>
            <person name="Keeling P.J."/>
        </authorList>
    </citation>
    <scope>NUCLEOTIDE SEQUENCE [LARGE SCALE GENOMIC DNA]</scope>
</reference>
<keyword id="KW-0934">Plastid</keyword>
<keyword id="KW-0687">Ribonucleoprotein</keyword>
<keyword id="KW-0689">Ribosomal protein</keyword>
<keyword id="KW-0694">RNA-binding</keyword>
<keyword id="KW-0699">rRNA-binding</keyword>
<name>RR19_HELSJ</name>
<gene>
    <name type="primary">rps19</name>
</gene>
<sequence length="117" mass="13510">MGINNINKIPVRNNKISFVAVHLIKALTSKKQEKLVKLQRKKKIISVIKTWSRSSTIVPLMIGEIIAVHNGREHIPVYITEEMVGFKLGEFATTRIWRGHLKKTTHKKNNKTYGLYF</sequence>